<keyword id="KW-0150">Chloroplast</keyword>
<keyword id="KW-0934">Plastid</keyword>
<keyword id="KW-0658">Purine biosynthesis</keyword>
<keyword id="KW-1185">Reference proteome</keyword>
<keyword id="KW-0808">Transferase</keyword>
<keyword id="KW-0809">Transit peptide</keyword>
<comment type="catalytic activity">
    <reaction>
        <text>N(1)-(5-phospho-beta-D-ribosyl)glycinamide + (6R)-10-formyltetrahydrofolate = N(2)-formyl-N(1)-(5-phospho-beta-D-ribosyl)glycinamide + (6S)-5,6,7,8-tetrahydrofolate + H(+)</text>
        <dbReference type="Rhea" id="RHEA:15053"/>
        <dbReference type="ChEBI" id="CHEBI:15378"/>
        <dbReference type="ChEBI" id="CHEBI:57453"/>
        <dbReference type="ChEBI" id="CHEBI:143788"/>
        <dbReference type="ChEBI" id="CHEBI:147286"/>
        <dbReference type="ChEBI" id="CHEBI:195366"/>
        <dbReference type="EC" id="2.1.2.2"/>
    </reaction>
</comment>
<comment type="pathway">
    <text>Purine metabolism; IMP biosynthesis via de novo pathway; N(2)-formyl-N(1)-(5-phospho-D-ribosyl)glycinamide from N(1)-(5-phospho-D-ribosyl)glycinamide (10-formyl THF route): step 1/1.</text>
</comment>
<comment type="subcellular location">
    <subcellularLocation>
        <location>Plastid</location>
        <location>Chloroplast</location>
    </subcellularLocation>
</comment>
<comment type="similarity">
    <text evidence="3">Belongs to the GART family.</text>
</comment>
<proteinExistence type="evidence at transcript level"/>
<sequence>MESRVLFSSQFNFPVNSPFKTRETSIAPLTPSRNVLSFSFRSPAERCAMRIVPLVKAASSTPQIVAEVDGSSHEPRRKKLAVFVSGGGSNFRKIHEGCSDGSVNGDVVLLVTNKKDCGGAEYARSNGIPVLVFPKAKREPSDGLSPSELVDVLRKYGVDFVLLAGYLKLIPVELVQAFPKRILNIHPALLPAFGGKGLYGIKVHKAVLESGARYSGPTIHFVNEEYDTGRILAQSAVRVIANDTPEELAKRVLHEEHKLYVEVVGAICEERIKWREDGVPLIQNKQNPDEYY</sequence>
<evidence type="ECO:0000250" key="1"/>
<evidence type="ECO:0000255" key="2"/>
<evidence type="ECO:0000305" key="3"/>
<organism>
    <name type="scientific">Arabidopsis thaliana</name>
    <name type="common">Mouse-ear cress</name>
    <dbReference type="NCBI Taxonomy" id="3702"/>
    <lineage>
        <taxon>Eukaryota</taxon>
        <taxon>Viridiplantae</taxon>
        <taxon>Streptophyta</taxon>
        <taxon>Embryophyta</taxon>
        <taxon>Tracheophyta</taxon>
        <taxon>Spermatophyta</taxon>
        <taxon>Magnoliopsida</taxon>
        <taxon>eudicotyledons</taxon>
        <taxon>Gunneridae</taxon>
        <taxon>Pentapetalae</taxon>
        <taxon>rosids</taxon>
        <taxon>malvids</taxon>
        <taxon>Brassicales</taxon>
        <taxon>Brassicaceae</taxon>
        <taxon>Camelineae</taxon>
        <taxon>Arabidopsis</taxon>
    </lineage>
</organism>
<dbReference type="EC" id="2.1.2.2"/>
<dbReference type="EMBL" id="X74767">
    <property type="protein sequence ID" value="CAA52779.2"/>
    <property type="molecule type" value="mRNA"/>
</dbReference>
<dbReference type="EMBL" id="AC004793">
    <property type="protein sequence ID" value="AAD21688.1"/>
    <property type="molecule type" value="Genomic_DNA"/>
</dbReference>
<dbReference type="EMBL" id="CP002684">
    <property type="protein sequence ID" value="AEE31329.1"/>
    <property type="molecule type" value="Genomic_DNA"/>
</dbReference>
<dbReference type="EMBL" id="BT003877">
    <property type="protein sequence ID" value="AAO41926.1"/>
    <property type="molecule type" value="mRNA"/>
</dbReference>
<dbReference type="EMBL" id="BT006080">
    <property type="protein sequence ID" value="AAP04065.1"/>
    <property type="molecule type" value="mRNA"/>
</dbReference>
<dbReference type="PIR" id="D86438">
    <property type="entry name" value="D86438"/>
</dbReference>
<dbReference type="PIR" id="S37105">
    <property type="entry name" value="S37105"/>
</dbReference>
<dbReference type="RefSeq" id="NP_174407.1">
    <property type="nucleotide sequence ID" value="NM_102860.3"/>
</dbReference>
<dbReference type="SMR" id="P52422"/>
<dbReference type="BioGRID" id="25245">
    <property type="interactions" value="1"/>
</dbReference>
<dbReference type="FunCoup" id="P52422">
    <property type="interactions" value="478"/>
</dbReference>
<dbReference type="STRING" id="3702.P52422"/>
<dbReference type="PaxDb" id="3702-AT1G31220.1"/>
<dbReference type="ProteomicsDB" id="226127"/>
<dbReference type="EnsemblPlants" id="AT1G31220.1">
    <property type="protein sequence ID" value="AT1G31220.1"/>
    <property type="gene ID" value="AT1G31220"/>
</dbReference>
<dbReference type="GeneID" id="840010"/>
<dbReference type="Gramene" id="AT1G31220.1">
    <property type="protein sequence ID" value="AT1G31220.1"/>
    <property type="gene ID" value="AT1G31220"/>
</dbReference>
<dbReference type="KEGG" id="ath:AT1G31220"/>
<dbReference type="Araport" id="AT1G31220"/>
<dbReference type="TAIR" id="AT1G31220"/>
<dbReference type="eggNOG" id="KOG3076">
    <property type="taxonomic scope" value="Eukaryota"/>
</dbReference>
<dbReference type="HOGENOM" id="CLU_038395_4_0_1"/>
<dbReference type="InParanoid" id="P52422"/>
<dbReference type="OMA" id="CGGADYA"/>
<dbReference type="PhylomeDB" id="P52422"/>
<dbReference type="BioCyc" id="ARA:AT1G31220-MONOMER"/>
<dbReference type="UniPathway" id="UPA00074">
    <property type="reaction ID" value="UER00126"/>
</dbReference>
<dbReference type="PRO" id="PR:P52422"/>
<dbReference type="Proteomes" id="UP000006548">
    <property type="component" value="Chromosome 1"/>
</dbReference>
<dbReference type="ExpressionAtlas" id="P52422">
    <property type="expression patterns" value="baseline and differential"/>
</dbReference>
<dbReference type="GO" id="GO:0009507">
    <property type="term" value="C:chloroplast"/>
    <property type="evidence" value="ECO:0007005"/>
    <property type="project" value="TAIR"/>
</dbReference>
<dbReference type="GO" id="GO:0004644">
    <property type="term" value="F:phosphoribosylglycinamide formyltransferase activity"/>
    <property type="evidence" value="ECO:0007669"/>
    <property type="project" value="UniProtKB-EC"/>
</dbReference>
<dbReference type="GO" id="GO:0006189">
    <property type="term" value="P:'de novo' IMP biosynthetic process"/>
    <property type="evidence" value="ECO:0007669"/>
    <property type="project" value="UniProtKB-UniPathway"/>
</dbReference>
<dbReference type="CDD" id="cd08645">
    <property type="entry name" value="FMT_core_GART"/>
    <property type="match status" value="1"/>
</dbReference>
<dbReference type="FunFam" id="3.40.50.170:FF:000011">
    <property type="entry name" value="phosphoribosylglycinamide formyltransferase, chloroplastic"/>
    <property type="match status" value="1"/>
</dbReference>
<dbReference type="Gene3D" id="3.40.50.170">
    <property type="entry name" value="Formyl transferase, N-terminal domain"/>
    <property type="match status" value="1"/>
</dbReference>
<dbReference type="HAMAP" id="MF_01930">
    <property type="entry name" value="PurN"/>
    <property type="match status" value="1"/>
</dbReference>
<dbReference type="InterPro" id="IPR002376">
    <property type="entry name" value="Formyl_transf_N"/>
</dbReference>
<dbReference type="InterPro" id="IPR036477">
    <property type="entry name" value="Formyl_transf_N_sf"/>
</dbReference>
<dbReference type="InterPro" id="IPR004607">
    <property type="entry name" value="GART"/>
</dbReference>
<dbReference type="InterPro" id="IPR001555">
    <property type="entry name" value="GART_AS"/>
</dbReference>
<dbReference type="NCBIfam" id="TIGR00639">
    <property type="entry name" value="PurN"/>
    <property type="match status" value="1"/>
</dbReference>
<dbReference type="PANTHER" id="PTHR43369">
    <property type="entry name" value="PHOSPHORIBOSYLGLYCINAMIDE FORMYLTRANSFERASE"/>
    <property type="match status" value="1"/>
</dbReference>
<dbReference type="PANTHER" id="PTHR43369:SF2">
    <property type="entry name" value="PHOSPHORIBOSYLGLYCINAMIDE FORMYLTRANSFERASE"/>
    <property type="match status" value="1"/>
</dbReference>
<dbReference type="Pfam" id="PF00551">
    <property type="entry name" value="Formyl_trans_N"/>
    <property type="match status" value="1"/>
</dbReference>
<dbReference type="SUPFAM" id="SSF53328">
    <property type="entry name" value="Formyltransferase"/>
    <property type="match status" value="1"/>
</dbReference>
<dbReference type="PROSITE" id="PS00373">
    <property type="entry name" value="GART"/>
    <property type="match status" value="1"/>
</dbReference>
<gene>
    <name type="primary">PUR3</name>
    <name type="ordered locus">At1g31220</name>
    <name type="ORF">F28K20.18</name>
</gene>
<reference key="1">
    <citation type="journal article" date="1994" name="Plant J.">
        <title>Molecular characterization of Arabidopsis thaliana cDNAs encoding three purine biosynthetic enzymes.</title>
        <authorList>
            <person name="Schnorr K.M."/>
            <person name="Nygaard P."/>
            <person name="Laloue M."/>
        </authorList>
    </citation>
    <scope>NUCLEOTIDE SEQUENCE [MRNA]</scope>
    <source>
        <strain>cv. Columbia</strain>
    </source>
</reference>
<reference key="2">
    <citation type="submission" date="1999-05" db="EMBL/GenBank/DDBJ databases">
        <authorList>
            <person name="Schnorr K.M."/>
        </authorList>
    </citation>
    <scope>SEQUENCE REVISION</scope>
</reference>
<reference key="3">
    <citation type="journal article" date="2000" name="Nature">
        <title>Sequence and analysis of chromosome 1 of the plant Arabidopsis thaliana.</title>
        <authorList>
            <person name="Theologis A."/>
            <person name="Ecker J.R."/>
            <person name="Palm C.J."/>
            <person name="Federspiel N.A."/>
            <person name="Kaul S."/>
            <person name="White O."/>
            <person name="Alonso J."/>
            <person name="Altafi H."/>
            <person name="Araujo R."/>
            <person name="Bowman C.L."/>
            <person name="Brooks S.Y."/>
            <person name="Buehler E."/>
            <person name="Chan A."/>
            <person name="Chao Q."/>
            <person name="Chen H."/>
            <person name="Cheuk R.F."/>
            <person name="Chin C.W."/>
            <person name="Chung M.K."/>
            <person name="Conn L."/>
            <person name="Conway A.B."/>
            <person name="Conway A.R."/>
            <person name="Creasy T.H."/>
            <person name="Dewar K."/>
            <person name="Dunn P."/>
            <person name="Etgu P."/>
            <person name="Feldblyum T.V."/>
            <person name="Feng J.-D."/>
            <person name="Fong B."/>
            <person name="Fujii C.Y."/>
            <person name="Gill J.E."/>
            <person name="Goldsmith A.D."/>
            <person name="Haas B."/>
            <person name="Hansen N.F."/>
            <person name="Hughes B."/>
            <person name="Huizar L."/>
            <person name="Hunter J.L."/>
            <person name="Jenkins J."/>
            <person name="Johnson-Hopson C."/>
            <person name="Khan S."/>
            <person name="Khaykin E."/>
            <person name="Kim C.J."/>
            <person name="Koo H.L."/>
            <person name="Kremenetskaia I."/>
            <person name="Kurtz D.B."/>
            <person name="Kwan A."/>
            <person name="Lam B."/>
            <person name="Langin-Hooper S."/>
            <person name="Lee A."/>
            <person name="Lee J.M."/>
            <person name="Lenz C.A."/>
            <person name="Li J.H."/>
            <person name="Li Y.-P."/>
            <person name="Lin X."/>
            <person name="Liu S.X."/>
            <person name="Liu Z.A."/>
            <person name="Luros J.S."/>
            <person name="Maiti R."/>
            <person name="Marziali A."/>
            <person name="Militscher J."/>
            <person name="Miranda M."/>
            <person name="Nguyen M."/>
            <person name="Nierman W.C."/>
            <person name="Osborne B.I."/>
            <person name="Pai G."/>
            <person name="Peterson J."/>
            <person name="Pham P.K."/>
            <person name="Rizzo M."/>
            <person name="Rooney T."/>
            <person name="Rowley D."/>
            <person name="Sakano H."/>
            <person name="Salzberg S.L."/>
            <person name="Schwartz J.R."/>
            <person name="Shinn P."/>
            <person name="Southwick A.M."/>
            <person name="Sun H."/>
            <person name="Tallon L.J."/>
            <person name="Tambunga G."/>
            <person name="Toriumi M.J."/>
            <person name="Town C.D."/>
            <person name="Utterback T."/>
            <person name="Van Aken S."/>
            <person name="Vaysberg M."/>
            <person name="Vysotskaia V.S."/>
            <person name="Walker M."/>
            <person name="Wu D."/>
            <person name="Yu G."/>
            <person name="Fraser C.M."/>
            <person name="Venter J.C."/>
            <person name="Davis R.W."/>
        </authorList>
    </citation>
    <scope>NUCLEOTIDE SEQUENCE [LARGE SCALE GENOMIC DNA]</scope>
    <source>
        <strain>cv. Columbia</strain>
    </source>
</reference>
<reference key="4">
    <citation type="journal article" date="2017" name="Plant J.">
        <title>Araport11: a complete reannotation of the Arabidopsis thaliana reference genome.</title>
        <authorList>
            <person name="Cheng C.Y."/>
            <person name="Krishnakumar V."/>
            <person name="Chan A.P."/>
            <person name="Thibaud-Nissen F."/>
            <person name="Schobel S."/>
            <person name="Town C.D."/>
        </authorList>
    </citation>
    <scope>GENOME REANNOTATION</scope>
    <source>
        <strain>cv. Columbia</strain>
    </source>
</reference>
<reference key="5">
    <citation type="journal article" date="2003" name="Science">
        <title>Empirical analysis of transcriptional activity in the Arabidopsis genome.</title>
        <authorList>
            <person name="Yamada K."/>
            <person name="Lim J."/>
            <person name="Dale J.M."/>
            <person name="Chen H."/>
            <person name="Shinn P."/>
            <person name="Palm C.J."/>
            <person name="Southwick A.M."/>
            <person name="Wu H.C."/>
            <person name="Kim C.J."/>
            <person name="Nguyen M."/>
            <person name="Pham P.K."/>
            <person name="Cheuk R.F."/>
            <person name="Karlin-Newmann G."/>
            <person name="Liu S.X."/>
            <person name="Lam B."/>
            <person name="Sakano H."/>
            <person name="Wu T."/>
            <person name="Yu G."/>
            <person name="Miranda M."/>
            <person name="Quach H.L."/>
            <person name="Tripp M."/>
            <person name="Chang C.H."/>
            <person name="Lee J.M."/>
            <person name="Toriumi M.J."/>
            <person name="Chan M.M."/>
            <person name="Tang C.C."/>
            <person name="Onodera C.S."/>
            <person name="Deng J.M."/>
            <person name="Akiyama K."/>
            <person name="Ansari Y."/>
            <person name="Arakawa T."/>
            <person name="Banh J."/>
            <person name="Banno F."/>
            <person name="Bowser L."/>
            <person name="Brooks S.Y."/>
            <person name="Carninci P."/>
            <person name="Chao Q."/>
            <person name="Choy N."/>
            <person name="Enju A."/>
            <person name="Goldsmith A.D."/>
            <person name="Gurjal M."/>
            <person name="Hansen N.F."/>
            <person name="Hayashizaki Y."/>
            <person name="Johnson-Hopson C."/>
            <person name="Hsuan V.W."/>
            <person name="Iida K."/>
            <person name="Karnes M."/>
            <person name="Khan S."/>
            <person name="Koesema E."/>
            <person name="Ishida J."/>
            <person name="Jiang P.X."/>
            <person name="Jones T."/>
            <person name="Kawai J."/>
            <person name="Kamiya A."/>
            <person name="Meyers C."/>
            <person name="Nakajima M."/>
            <person name="Narusaka M."/>
            <person name="Seki M."/>
            <person name="Sakurai T."/>
            <person name="Satou M."/>
            <person name="Tamse R."/>
            <person name="Vaysberg M."/>
            <person name="Wallender E.K."/>
            <person name="Wong C."/>
            <person name="Yamamura Y."/>
            <person name="Yuan S."/>
            <person name="Shinozaki K."/>
            <person name="Davis R.W."/>
            <person name="Theologis A."/>
            <person name="Ecker J.R."/>
        </authorList>
    </citation>
    <scope>NUCLEOTIDE SEQUENCE [LARGE SCALE MRNA]</scope>
    <source>
        <strain>cv. Columbia</strain>
    </source>
</reference>
<feature type="transit peptide" description="Chloroplast" evidence="2">
    <location>
        <begin position="1"/>
        <end position="65"/>
    </location>
</feature>
<feature type="chain" id="PRO_0000029876" description="Phosphoribosylglycinamide formyltransferase, chloroplastic">
    <location>
        <begin position="66"/>
        <end position="292"/>
    </location>
</feature>
<feature type="active site" description="Proton donor" evidence="1">
    <location>
        <position position="186"/>
    </location>
</feature>
<feature type="binding site" evidence="1">
    <location>
        <begin position="88"/>
        <end position="90"/>
    </location>
    <ligand>
        <name>N(1)-(5-phospho-beta-D-ribosyl)glycinamide</name>
        <dbReference type="ChEBI" id="CHEBI:143788"/>
    </ligand>
</feature>
<feature type="binding site" evidence="1">
    <location>
        <begin position="167"/>
        <end position="170"/>
    </location>
    <ligand>
        <name>(6R)-10-formyltetrahydrofolate</name>
        <dbReference type="ChEBI" id="CHEBI:195366"/>
    </ligand>
</feature>
<feature type="binding site" evidence="1">
    <location>
        <position position="184"/>
    </location>
    <ligand>
        <name>(6R)-10-formyltetrahydrofolate</name>
        <dbReference type="ChEBI" id="CHEBI:195366"/>
    </ligand>
</feature>
<feature type="binding site" evidence="1">
    <location>
        <position position="227"/>
    </location>
    <ligand>
        <name>(6R)-10-formyltetrahydrofolate</name>
        <dbReference type="ChEBI" id="CHEBI:195366"/>
    </ligand>
</feature>
<feature type="binding site" evidence="1">
    <location>
        <position position="256"/>
    </location>
    <ligand>
        <name>N(1)-(5-phospho-beta-D-ribosyl)glycinamide</name>
        <dbReference type="ChEBI" id="CHEBI:143788"/>
    </ligand>
</feature>
<feature type="site" description="Raises pKa of active site His" evidence="1">
    <location>
        <position position="227"/>
    </location>
</feature>
<name>PUR3_ARATH</name>
<protein>
    <recommendedName>
        <fullName>Phosphoribosylglycinamide formyltransferase, chloroplastic</fullName>
        <ecNumber>2.1.2.2</ecNumber>
    </recommendedName>
    <alternativeName>
        <fullName>5'-phosphoribosylglycinamide transformylase</fullName>
    </alternativeName>
    <alternativeName>
        <fullName>GAR transformylase</fullName>
        <shortName>GART</shortName>
    </alternativeName>
</protein>
<accession>P52422</accession>